<protein>
    <recommendedName>
        <fullName evidence="1">4-hydroxy-3-methylbut-2-en-1-yl diphosphate synthase (flavodoxin)</fullName>
        <ecNumber evidence="1">1.17.7.3</ecNumber>
    </recommendedName>
    <alternativeName>
        <fullName evidence="1">1-hydroxy-2-methyl-2-(E)-butenyl 4-diphosphate synthase</fullName>
    </alternativeName>
</protein>
<proteinExistence type="inferred from homology"/>
<dbReference type="EC" id="1.17.7.3" evidence="1"/>
<dbReference type="EMBL" id="AE014291">
    <property type="protein sequence ID" value="AAN30676.1"/>
    <property type="molecule type" value="Genomic_DNA"/>
</dbReference>
<dbReference type="EMBL" id="CP002997">
    <property type="protein sequence ID" value="AEM19093.1"/>
    <property type="molecule type" value="Genomic_DNA"/>
</dbReference>
<dbReference type="RefSeq" id="WP_004690487.1">
    <property type="nucleotide sequence ID" value="NZ_KN046804.1"/>
</dbReference>
<dbReference type="SMR" id="Q8FYT2"/>
<dbReference type="GeneID" id="45052739"/>
<dbReference type="KEGG" id="bms:BR1778"/>
<dbReference type="KEGG" id="bsi:BS1330_I1772"/>
<dbReference type="PATRIC" id="fig|204722.22.peg.80"/>
<dbReference type="HOGENOM" id="CLU_042258_1_0_5"/>
<dbReference type="PhylomeDB" id="Q8FYT2"/>
<dbReference type="UniPathway" id="UPA00056">
    <property type="reaction ID" value="UER00096"/>
</dbReference>
<dbReference type="Proteomes" id="UP000007104">
    <property type="component" value="Chromosome I"/>
</dbReference>
<dbReference type="GO" id="GO:0051539">
    <property type="term" value="F:4 iron, 4 sulfur cluster binding"/>
    <property type="evidence" value="ECO:0007669"/>
    <property type="project" value="UniProtKB-UniRule"/>
</dbReference>
<dbReference type="GO" id="GO:0046429">
    <property type="term" value="F:4-hydroxy-3-methylbut-2-en-1-yl diphosphate synthase activity (ferredoxin)"/>
    <property type="evidence" value="ECO:0007669"/>
    <property type="project" value="UniProtKB-UniRule"/>
</dbReference>
<dbReference type="GO" id="GO:0141197">
    <property type="term" value="F:4-hydroxy-3-methylbut-2-enyl-diphosphate synthase activity (flavodoxin)"/>
    <property type="evidence" value="ECO:0007669"/>
    <property type="project" value="UniProtKB-EC"/>
</dbReference>
<dbReference type="GO" id="GO:0005506">
    <property type="term" value="F:iron ion binding"/>
    <property type="evidence" value="ECO:0007669"/>
    <property type="project" value="InterPro"/>
</dbReference>
<dbReference type="GO" id="GO:0019288">
    <property type="term" value="P:isopentenyl diphosphate biosynthetic process, methylerythritol 4-phosphate pathway"/>
    <property type="evidence" value="ECO:0007669"/>
    <property type="project" value="UniProtKB-UniRule"/>
</dbReference>
<dbReference type="GO" id="GO:0016114">
    <property type="term" value="P:terpenoid biosynthetic process"/>
    <property type="evidence" value="ECO:0007669"/>
    <property type="project" value="InterPro"/>
</dbReference>
<dbReference type="FunFam" id="3.30.413.10:FF:000012">
    <property type="entry name" value="4-hydroxy-3-methylbut-2-en-1-yl diphosphate synthase (flavodoxin)"/>
    <property type="match status" value="1"/>
</dbReference>
<dbReference type="Gene3D" id="3.20.20.20">
    <property type="entry name" value="Dihydropteroate synthase-like"/>
    <property type="match status" value="1"/>
</dbReference>
<dbReference type="Gene3D" id="3.30.413.10">
    <property type="entry name" value="Sulfite Reductase Hemoprotein, domain 1"/>
    <property type="match status" value="1"/>
</dbReference>
<dbReference type="HAMAP" id="MF_00159">
    <property type="entry name" value="IspG"/>
    <property type="match status" value="1"/>
</dbReference>
<dbReference type="InterPro" id="IPR011005">
    <property type="entry name" value="Dihydropteroate_synth-like_sf"/>
</dbReference>
<dbReference type="InterPro" id="IPR016425">
    <property type="entry name" value="IspG_bac"/>
</dbReference>
<dbReference type="InterPro" id="IPR004588">
    <property type="entry name" value="IspG_bac-typ"/>
</dbReference>
<dbReference type="InterPro" id="IPR045854">
    <property type="entry name" value="NO2/SO3_Rdtase_4Fe4S_sf"/>
</dbReference>
<dbReference type="NCBIfam" id="TIGR00612">
    <property type="entry name" value="ispG_gcpE"/>
    <property type="match status" value="1"/>
</dbReference>
<dbReference type="NCBIfam" id="NF001540">
    <property type="entry name" value="PRK00366.1"/>
    <property type="match status" value="1"/>
</dbReference>
<dbReference type="PANTHER" id="PTHR30454">
    <property type="entry name" value="4-HYDROXY-3-METHYLBUT-2-EN-1-YL DIPHOSPHATE SYNTHASE"/>
    <property type="match status" value="1"/>
</dbReference>
<dbReference type="PANTHER" id="PTHR30454:SF0">
    <property type="entry name" value="4-HYDROXY-3-METHYLBUT-2-EN-1-YL DIPHOSPHATE SYNTHASE (FERREDOXIN), CHLOROPLASTIC"/>
    <property type="match status" value="1"/>
</dbReference>
<dbReference type="Pfam" id="PF04551">
    <property type="entry name" value="GcpE"/>
    <property type="match status" value="1"/>
</dbReference>
<dbReference type="PIRSF" id="PIRSF004640">
    <property type="entry name" value="IspG"/>
    <property type="match status" value="1"/>
</dbReference>
<dbReference type="SUPFAM" id="SSF56014">
    <property type="entry name" value="Nitrite and sulphite reductase 4Fe-4S domain-like"/>
    <property type="match status" value="1"/>
</dbReference>
<organism>
    <name type="scientific">Brucella suis biovar 1 (strain 1330)</name>
    <dbReference type="NCBI Taxonomy" id="204722"/>
    <lineage>
        <taxon>Bacteria</taxon>
        <taxon>Pseudomonadati</taxon>
        <taxon>Pseudomonadota</taxon>
        <taxon>Alphaproteobacteria</taxon>
        <taxon>Hyphomicrobiales</taxon>
        <taxon>Brucellaceae</taxon>
        <taxon>Brucella/Ochrobactrum group</taxon>
        <taxon>Brucella</taxon>
    </lineage>
</organism>
<gene>
    <name evidence="1" type="primary">ispG</name>
    <name type="synonym">gcpE</name>
    <name type="ordered locus">BR1778</name>
    <name type="ordered locus">BS1330_I1772</name>
</gene>
<feature type="chain" id="PRO_0000190548" description="4-hydroxy-3-methylbut-2-en-1-yl diphosphate synthase (flavodoxin)">
    <location>
        <begin position="1"/>
        <end position="420"/>
    </location>
</feature>
<feature type="binding site" evidence="1">
    <location>
        <position position="307"/>
    </location>
    <ligand>
        <name>[4Fe-4S] cluster</name>
        <dbReference type="ChEBI" id="CHEBI:49883"/>
    </ligand>
</feature>
<feature type="binding site" evidence="1">
    <location>
        <position position="310"/>
    </location>
    <ligand>
        <name>[4Fe-4S] cluster</name>
        <dbReference type="ChEBI" id="CHEBI:49883"/>
    </ligand>
</feature>
<feature type="binding site" evidence="1">
    <location>
        <position position="353"/>
    </location>
    <ligand>
        <name>[4Fe-4S] cluster</name>
        <dbReference type="ChEBI" id="CHEBI:49883"/>
    </ligand>
</feature>
<feature type="binding site" evidence="1">
    <location>
        <position position="360"/>
    </location>
    <ligand>
        <name>[4Fe-4S] cluster</name>
        <dbReference type="ChEBI" id="CHEBI:49883"/>
    </ligand>
</feature>
<name>ISPG_BRUSU</name>
<sequence length="420" mass="45030">MSSETVSYFSHPFPRRQSVGVSVGGVIVGGSAPVVVQSMTNTDTADVDSTVAQVAALHRAGSEIVRITVDRDESAAAVPKIRERLERLGHDVPLVGDFHYIGHKLLADHPACAEALAKYRINPGNVGFKDKKDKQFADIVEMAIRYDKPVRIGVNWGSLDQELLTTLMDRNQAEGAPLSAQDVMREAIVQSALISANLAEEIGLGRDKIILSAKVSQVQDLIAVYTMLAQRSNHALHLGLTEAGMGTKGIVASSAAMGILLQQGIGDTIRISLTPEPGGDRTREVQVAQELLQTMGFRQFVPIVAACPGCGRTTSTVFQELAQTIQEDIRRNMPLWREKYPGVEALSVAVMGCIVNGPGESKHADIGISLPGTGETPSAPVFVDGKKVATLRGPGIAEDFQKMVADYIENRFGLGRKIAS</sequence>
<reference key="1">
    <citation type="journal article" date="2002" name="Proc. Natl. Acad. Sci. U.S.A.">
        <title>The Brucella suis genome reveals fundamental similarities between animal and plant pathogens and symbionts.</title>
        <authorList>
            <person name="Paulsen I.T."/>
            <person name="Seshadri R."/>
            <person name="Nelson K.E."/>
            <person name="Eisen J.A."/>
            <person name="Heidelberg J.F."/>
            <person name="Read T.D."/>
            <person name="Dodson R.J."/>
            <person name="Umayam L.A."/>
            <person name="Brinkac L.M."/>
            <person name="Beanan M.J."/>
            <person name="Daugherty S.C."/>
            <person name="DeBoy R.T."/>
            <person name="Durkin A.S."/>
            <person name="Kolonay J.F."/>
            <person name="Madupu R."/>
            <person name="Nelson W.C."/>
            <person name="Ayodeji B."/>
            <person name="Kraul M."/>
            <person name="Shetty J."/>
            <person name="Malek J.A."/>
            <person name="Van Aken S.E."/>
            <person name="Riedmuller S."/>
            <person name="Tettelin H."/>
            <person name="Gill S.R."/>
            <person name="White O."/>
            <person name="Salzberg S.L."/>
            <person name="Hoover D.L."/>
            <person name="Lindler L.E."/>
            <person name="Halling S.M."/>
            <person name="Boyle S.M."/>
            <person name="Fraser C.M."/>
        </authorList>
    </citation>
    <scope>NUCLEOTIDE SEQUENCE [LARGE SCALE GENOMIC DNA]</scope>
    <source>
        <strain>1330</strain>
    </source>
</reference>
<reference key="2">
    <citation type="journal article" date="2011" name="J. Bacteriol.">
        <title>Revised genome sequence of Brucella suis 1330.</title>
        <authorList>
            <person name="Tae H."/>
            <person name="Shallom S."/>
            <person name="Settlage R."/>
            <person name="Preston D."/>
            <person name="Adams L.G."/>
            <person name="Garner H.R."/>
        </authorList>
    </citation>
    <scope>NUCLEOTIDE SEQUENCE [LARGE SCALE GENOMIC DNA]</scope>
    <source>
        <strain>1330</strain>
    </source>
</reference>
<keyword id="KW-0004">4Fe-4S</keyword>
<keyword id="KW-0408">Iron</keyword>
<keyword id="KW-0411">Iron-sulfur</keyword>
<keyword id="KW-0414">Isoprene biosynthesis</keyword>
<keyword id="KW-0479">Metal-binding</keyword>
<keyword id="KW-0560">Oxidoreductase</keyword>
<comment type="function">
    <text evidence="1">Converts 2C-methyl-D-erythritol 2,4-cyclodiphosphate (ME-2,4cPP) into 1-hydroxy-2-methyl-2-(E)-butenyl 4-diphosphate.</text>
</comment>
<comment type="catalytic activity">
    <reaction evidence="1">
        <text>(2E)-4-hydroxy-3-methylbut-2-enyl diphosphate + oxidized [flavodoxin] + H2O + 2 H(+) = 2-C-methyl-D-erythritol 2,4-cyclic diphosphate + reduced [flavodoxin]</text>
        <dbReference type="Rhea" id="RHEA:43604"/>
        <dbReference type="Rhea" id="RHEA-COMP:10622"/>
        <dbReference type="Rhea" id="RHEA-COMP:10623"/>
        <dbReference type="ChEBI" id="CHEBI:15377"/>
        <dbReference type="ChEBI" id="CHEBI:15378"/>
        <dbReference type="ChEBI" id="CHEBI:57618"/>
        <dbReference type="ChEBI" id="CHEBI:58210"/>
        <dbReference type="ChEBI" id="CHEBI:58483"/>
        <dbReference type="ChEBI" id="CHEBI:128753"/>
        <dbReference type="EC" id="1.17.7.3"/>
    </reaction>
</comment>
<comment type="cofactor">
    <cofactor evidence="1">
        <name>[4Fe-4S] cluster</name>
        <dbReference type="ChEBI" id="CHEBI:49883"/>
    </cofactor>
    <text evidence="1">Binds 1 [4Fe-4S] cluster.</text>
</comment>
<comment type="pathway">
    <text evidence="1">Isoprenoid biosynthesis; isopentenyl diphosphate biosynthesis via DXP pathway; isopentenyl diphosphate from 1-deoxy-D-xylulose 5-phosphate: step 5/6.</text>
</comment>
<comment type="similarity">
    <text evidence="1">Belongs to the IspG family.</text>
</comment>
<evidence type="ECO:0000255" key="1">
    <source>
        <dbReference type="HAMAP-Rule" id="MF_00159"/>
    </source>
</evidence>
<accession>Q8FYT2</accession>
<accession>G0K7B7</accession>